<reference key="1">
    <citation type="submission" date="2008-08" db="EMBL/GenBank/DDBJ databases">
        <title>The complete genome sequence of Thermodesulfovibrio yellowstonii strain ATCC 51303 / DSM 11347 / YP87.</title>
        <authorList>
            <person name="Dodson R.J."/>
            <person name="Durkin A.S."/>
            <person name="Wu M."/>
            <person name="Eisen J."/>
            <person name="Sutton G."/>
        </authorList>
    </citation>
    <scope>NUCLEOTIDE SEQUENCE [LARGE SCALE GENOMIC DNA]</scope>
    <source>
        <strain>ATCC 51303 / DSM 11347 / YP87</strain>
    </source>
</reference>
<evidence type="ECO:0000255" key="1">
    <source>
        <dbReference type="HAMAP-Rule" id="MF_01595"/>
    </source>
</evidence>
<accession>B5YHN2</accession>
<gene>
    <name evidence="1" type="primary">pnp</name>
    <name type="ordered locus">THEYE_A1827</name>
</gene>
<keyword id="KW-0963">Cytoplasm</keyword>
<keyword id="KW-0460">Magnesium</keyword>
<keyword id="KW-0479">Metal-binding</keyword>
<keyword id="KW-0548">Nucleotidyltransferase</keyword>
<keyword id="KW-1185">Reference proteome</keyword>
<keyword id="KW-0694">RNA-binding</keyword>
<keyword id="KW-0808">Transferase</keyword>
<feature type="chain" id="PRO_0000381923" description="Polyribonucleotide nucleotidyltransferase">
    <location>
        <begin position="1"/>
        <end position="710"/>
    </location>
</feature>
<feature type="domain" description="KH" evidence="1">
    <location>
        <begin position="558"/>
        <end position="618"/>
    </location>
</feature>
<feature type="domain" description="S1 motif" evidence="1">
    <location>
        <begin position="628"/>
        <end position="696"/>
    </location>
</feature>
<feature type="binding site" evidence="1">
    <location>
        <position position="491"/>
    </location>
    <ligand>
        <name>Mg(2+)</name>
        <dbReference type="ChEBI" id="CHEBI:18420"/>
    </ligand>
</feature>
<feature type="binding site" evidence="1">
    <location>
        <position position="497"/>
    </location>
    <ligand>
        <name>Mg(2+)</name>
        <dbReference type="ChEBI" id="CHEBI:18420"/>
    </ligand>
</feature>
<protein>
    <recommendedName>
        <fullName evidence="1">Polyribonucleotide nucleotidyltransferase</fullName>
        <ecNumber evidence="1">2.7.7.8</ecNumber>
    </recommendedName>
    <alternativeName>
        <fullName evidence="1">Polynucleotide phosphorylase</fullName>
        <shortName evidence="1">PNPase</shortName>
    </alternativeName>
</protein>
<organism>
    <name type="scientific">Thermodesulfovibrio yellowstonii (strain ATCC 51303 / DSM 11347 / YP87)</name>
    <dbReference type="NCBI Taxonomy" id="289376"/>
    <lineage>
        <taxon>Bacteria</taxon>
        <taxon>Pseudomonadati</taxon>
        <taxon>Nitrospirota</taxon>
        <taxon>Thermodesulfovibrionia</taxon>
        <taxon>Thermodesulfovibrionales</taxon>
        <taxon>Thermodesulfovibrionaceae</taxon>
        <taxon>Thermodesulfovibrio</taxon>
    </lineage>
</organism>
<proteinExistence type="inferred from homology"/>
<dbReference type="EC" id="2.7.7.8" evidence="1"/>
<dbReference type="EMBL" id="CP001147">
    <property type="protein sequence ID" value="ACI21006.1"/>
    <property type="molecule type" value="Genomic_DNA"/>
</dbReference>
<dbReference type="RefSeq" id="WP_012545734.1">
    <property type="nucleotide sequence ID" value="NC_011296.1"/>
</dbReference>
<dbReference type="RefSeq" id="YP_002249618.1">
    <property type="nucleotide sequence ID" value="NC_011296.1"/>
</dbReference>
<dbReference type="SMR" id="B5YHN2"/>
<dbReference type="FunCoup" id="B5YHN2">
    <property type="interactions" value="450"/>
</dbReference>
<dbReference type="STRING" id="289376.THEYE_A1827"/>
<dbReference type="EnsemblBacteria" id="ACI21006">
    <property type="protein sequence ID" value="ACI21006"/>
    <property type="gene ID" value="THEYE_A1827"/>
</dbReference>
<dbReference type="KEGG" id="tye:THEYE_A1827"/>
<dbReference type="PATRIC" id="fig|289376.4.peg.1782"/>
<dbReference type="eggNOG" id="COG1185">
    <property type="taxonomic scope" value="Bacteria"/>
</dbReference>
<dbReference type="HOGENOM" id="CLU_004217_2_2_0"/>
<dbReference type="InParanoid" id="B5YHN2"/>
<dbReference type="OrthoDB" id="9804305at2"/>
<dbReference type="Proteomes" id="UP000000718">
    <property type="component" value="Chromosome"/>
</dbReference>
<dbReference type="GO" id="GO:0005829">
    <property type="term" value="C:cytosol"/>
    <property type="evidence" value="ECO:0000318"/>
    <property type="project" value="GO_Central"/>
</dbReference>
<dbReference type="GO" id="GO:0000175">
    <property type="term" value="F:3'-5'-RNA exonuclease activity"/>
    <property type="evidence" value="ECO:0000318"/>
    <property type="project" value="GO_Central"/>
</dbReference>
<dbReference type="GO" id="GO:0000287">
    <property type="term" value="F:magnesium ion binding"/>
    <property type="evidence" value="ECO:0007669"/>
    <property type="project" value="UniProtKB-UniRule"/>
</dbReference>
<dbReference type="GO" id="GO:0004654">
    <property type="term" value="F:polyribonucleotide nucleotidyltransferase activity"/>
    <property type="evidence" value="ECO:0000318"/>
    <property type="project" value="GO_Central"/>
</dbReference>
<dbReference type="GO" id="GO:0003723">
    <property type="term" value="F:RNA binding"/>
    <property type="evidence" value="ECO:0007669"/>
    <property type="project" value="UniProtKB-UniRule"/>
</dbReference>
<dbReference type="GO" id="GO:0006402">
    <property type="term" value="P:mRNA catabolic process"/>
    <property type="evidence" value="ECO:0007669"/>
    <property type="project" value="UniProtKB-UniRule"/>
</dbReference>
<dbReference type="GO" id="GO:0006401">
    <property type="term" value="P:RNA catabolic process"/>
    <property type="evidence" value="ECO:0000318"/>
    <property type="project" value="GO_Central"/>
</dbReference>
<dbReference type="GO" id="GO:0006396">
    <property type="term" value="P:RNA processing"/>
    <property type="evidence" value="ECO:0007669"/>
    <property type="project" value="InterPro"/>
</dbReference>
<dbReference type="CDD" id="cd02393">
    <property type="entry name" value="KH-I_PNPase"/>
    <property type="match status" value="1"/>
</dbReference>
<dbReference type="CDD" id="cd11363">
    <property type="entry name" value="RNase_PH_PNPase_1"/>
    <property type="match status" value="1"/>
</dbReference>
<dbReference type="CDD" id="cd11364">
    <property type="entry name" value="RNase_PH_PNPase_2"/>
    <property type="match status" value="1"/>
</dbReference>
<dbReference type="CDD" id="cd04472">
    <property type="entry name" value="S1_PNPase"/>
    <property type="match status" value="1"/>
</dbReference>
<dbReference type="FunFam" id="2.40.50.140:FF:000023">
    <property type="entry name" value="Polyribonucleotide nucleotidyltransferase"/>
    <property type="match status" value="1"/>
</dbReference>
<dbReference type="FunFam" id="3.30.1370.10:FF:000001">
    <property type="entry name" value="Polyribonucleotide nucleotidyltransferase"/>
    <property type="match status" value="1"/>
</dbReference>
<dbReference type="FunFam" id="3.30.230.70:FF:000001">
    <property type="entry name" value="Polyribonucleotide nucleotidyltransferase"/>
    <property type="match status" value="1"/>
</dbReference>
<dbReference type="FunFam" id="3.30.230.70:FF:000002">
    <property type="entry name" value="Polyribonucleotide nucleotidyltransferase"/>
    <property type="match status" value="1"/>
</dbReference>
<dbReference type="Gene3D" id="3.30.230.70">
    <property type="entry name" value="GHMP Kinase, N-terminal domain"/>
    <property type="match status" value="2"/>
</dbReference>
<dbReference type="Gene3D" id="3.30.1370.10">
    <property type="entry name" value="K Homology domain, type 1"/>
    <property type="match status" value="1"/>
</dbReference>
<dbReference type="Gene3D" id="2.40.50.140">
    <property type="entry name" value="Nucleic acid-binding proteins"/>
    <property type="match status" value="1"/>
</dbReference>
<dbReference type="HAMAP" id="MF_01595">
    <property type="entry name" value="PNPase"/>
    <property type="match status" value="1"/>
</dbReference>
<dbReference type="InterPro" id="IPR001247">
    <property type="entry name" value="ExoRNase_PH_dom1"/>
</dbReference>
<dbReference type="InterPro" id="IPR015847">
    <property type="entry name" value="ExoRNase_PH_dom2"/>
</dbReference>
<dbReference type="InterPro" id="IPR036345">
    <property type="entry name" value="ExoRNase_PH_dom2_sf"/>
</dbReference>
<dbReference type="InterPro" id="IPR004087">
    <property type="entry name" value="KH_dom"/>
</dbReference>
<dbReference type="InterPro" id="IPR004088">
    <property type="entry name" value="KH_dom_type_1"/>
</dbReference>
<dbReference type="InterPro" id="IPR036612">
    <property type="entry name" value="KH_dom_type_1_sf"/>
</dbReference>
<dbReference type="InterPro" id="IPR012340">
    <property type="entry name" value="NA-bd_OB-fold"/>
</dbReference>
<dbReference type="InterPro" id="IPR012162">
    <property type="entry name" value="PNPase"/>
</dbReference>
<dbReference type="InterPro" id="IPR027408">
    <property type="entry name" value="PNPase/RNase_PH_dom_sf"/>
</dbReference>
<dbReference type="InterPro" id="IPR015848">
    <property type="entry name" value="PNPase_PH_RNA-bd_bac/org-type"/>
</dbReference>
<dbReference type="InterPro" id="IPR036456">
    <property type="entry name" value="PNPase_PH_RNA-bd_sf"/>
</dbReference>
<dbReference type="InterPro" id="IPR020568">
    <property type="entry name" value="Ribosomal_Su5_D2-typ_SF"/>
</dbReference>
<dbReference type="InterPro" id="IPR003029">
    <property type="entry name" value="S1_domain"/>
</dbReference>
<dbReference type="NCBIfam" id="TIGR03591">
    <property type="entry name" value="polynuc_phos"/>
    <property type="match status" value="1"/>
</dbReference>
<dbReference type="NCBIfam" id="NF008805">
    <property type="entry name" value="PRK11824.1"/>
    <property type="match status" value="1"/>
</dbReference>
<dbReference type="PANTHER" id="PTHR11252">
    <property type="entry name" value="POLYRIBONUCLEOTIDE NUCLEOTIDYLTRANSFERASE"/>
    <property type="match status" value="1"/>
</dbReference>
<dbReference type="PANTHER" id="PTHR11252:SF0">
    <property type="entry name" value="POLYRIBONUCLEOTIDE NUCLEOTIDYLTRANSFERASE 1, MITOCHONDRIAL"/>
    <property type="match status" value="1"/>
</dbReference>
<dbReference type="Pfam" id="PF00013">
    <property type="entry name" value="KH_1"/>
    <property type="match status" value="1"/>
</dbReference>
<dbReference type="Pfam" id="PF03726">
    <property type="entry name" value="PNPase"/>
    <property type="match status" value="1"/>
</dbReference>
<dbReference type="Pfam" id="PF01138">
    <property type="entry name" value="RNase_PH"/>
    <property type="match status" value="2"/>
</dbReference>
<dbReference type="Pfam" id="PF03725">
    <property type="entry name" value="RNase_PH_C"/>
    <property type="match status" value="2"/>
</dbReference>
<dbReference type="Pfam" id="PF00575">
    <property type="entry name" value="S1"/>
    <property type="match status" value="1"/>
</dbReference>
<dbReference type="PIRSF" id="PIRSF005499">
    <property type="entry name" value="PNPase"/>
    <property type="match status" value="1"/>
</dbReference>
<dbReference type="SMART" id="SM00322">
    <property type="entry name" value="KH"/>
    <property type="match status" value="1"/>
</dbReference>
<dbReference type="SMART" id="SM00316">
    <property type="entry name" value="S1"/>
    <property type="match status" value="1"/>
</dbReference>
<dbReference type="SUPFAM" id="SSF54791">
    <property type="entry name" value="Eukaryotic type KH-domain (KH-domain type I)"/>
    <property type="match status" value="1"/>
</dbReference>
<dbReference type="SUPFAM" id="SSF50249">
    <property type="entry name" value="Nucleic acid-binding proteins"/>
    <property type="match status" value="1"/>
</dbReference>
<dbReference type="SUPFAM" id="SSF46915">
    <property type="entry name" value="Polynucleotide phosphorylase/guanosine pentaphosphate synthase (PNPase/GPSI), domain 3"/>
    <property type="match status" value="1"/>
</dbReference>
<dbReference type="SUPFAM" id="SSF55666">
    <property type="entry name" value="Ribonuclease PH domain 2-like"/>
    <property type="match status" value="2"/>
</dbReference>
<dbReference type="SUPFAM" id="SSF54211">
    <property type="entry name" value="Ribosomal protein S5 domain 2-like"/>
    <property type="match status" value="2"/>
</dbReference>
<dbReference type="PROSITE" id="PS50084">
    <property type="entry name" value="KH_TYPE_1"/>
    <property type="match status" value="1"/>
</dbReference>
<dbReference type="PROSITE" id="PS50126">
    <property type="entry name" value="S1"/>
    <property type="match status" value="1"/>
</dbReference>
<name>PNP_THEYD</name>
<comment type="function">
    <text evidence="1">Involved in mRNA degradation. Catalyzes the phosphorolysis of single-stranded polyribonucleotides processively in the 3'- to 5'-direction.</text>
</comment>
<comment type="catalytic activity">
    <reaction evidence="1">
        <text>RNA(n+1) + phosphate = RNA(n) + a ribonucleoside 5'-diphosphate</text>
        <dbReference type="Rhea" id="RHEA:22096"/>
        <dbReference type="Rhea" id="RHEA-COMP:14527"/>
        <dbReference type="Rhea" id="RHEA-COMP:17342"/>
        <dbReference type="ChEBI" id="CHEBI:43474"/>
        <dbReference type="ChEBI" id="CHEBI:57930"/>
        <dbReference type="ChEBI" id="CHEBI:140395"/>
        <dbReference type="EC" id="2.7.7.8"/>
    </reaction>
</comment>
<comment type="cofactor">
    <cofactor evidence="1">
        <name>Mg(2+)</name>
        <dbReference type="ChEBI" id="CHEBI:18420"/>
    </cofactor>
</comment>
<comment type="subcellular location">
    <subcellularLocation>
        <location evidence="1">Cytoplasm</location>
    </subcellularLocation>
</comment>
<comment type="similarity">
    <text evidence="1">Belongs to the polyribonucleotide nucleotidyltransferase family.</text>
</comment>
<sequence length="710" mass="78252">MEVELEIKGKKLVLQTGIFAKQTNGSVLAKYGDTYVLCTVVAEKTPKEGLDFVPLTIDYQEKAYSAGKIPGGFFKREGKPTDREILVSRLIDRPVRPLFPDGFNYETQGIASVLSYGDENIADILSIIGISSALTISDIPFNGPVAAVRVGMVEEEFILNPDNDEAEKSILNLVVAGTEEAVTMVEGGAAECSEETLVEALKFAHTHIKKIIALQKKLQQLSGKPKREIISLNGDEEIQKAILNIIGGKIENALFLPKKVERQQALDELLNECLQNLNTEEFRQKLYGNFDKDISLEITNAFDKVIKKFMRESIVKKGIRADGRKSDEIRPITCMIGILPRVHGSALFTRGETQALVATTLGTSEDEQKVDSLEGEIFKTFMLHYNFLPFSVGEVKPLRAPGRREIGHGYLAERALSYVIPSKDEFPYTIRVVSDILESNGSSSMATVCGATLSLMDAGVPIKAPVAGVAMGLIKEGDKTVVLTDILGMEDHYGDMDFKVAGTEKGITAFQMDVKISGISYEIFKKALKQAKQARLFILKKMAETISEPKKELSLYAPRIYKIQVKPEKIRDIIGTGGKVIKGIIEETGVKIDIEDKEGIVKIASSNESAAQKAIEIIKGITQEAELGRIYMGKVTRIVDFGAFVEIMPGVEGLLHISQIADKRIQKVSEVLKTGEQIPVKVIEIDELGRVRLSRKEALREIENRTATKT</sequence>